<organismHost>
    <name type="scientific">Mus musculus</name>
    <name type="common">Mouse</name>
    <dbReference type="NCBI Taxonomy" id="10090"/>
</organismHost>
<name>VP2_POVMK</name>
<feature type="initiator methionine" description="Removed; by host" evidence="1">
    <location>
        <position position="1"/>
    </location>
</feature>
<feature type="chain" id="PRO_0000039221" description="Minor capsid protein VP2">
    <location>
        <begin position="2"/>
        <end position="324"/>
    </location>
</feature>
<feature type="region of interest" description="D1" evidence="1">
    <location>
        <begin position="261"/>
        <end position="296"/>
    </location>
</feature>
<feature type="region of interest" description="DNA-binding" evidence="1">
    <location>
        <begin position="301"/>
        <end position="324"/>
    </location>
</feature>
<feature type="region of interest" description="Disordered" evidence="2">
    <location>
        <begin position="302"/>
        <end position="324"/>
    </location>
</feature>
<feature type="short sequence motif" description="Nuclear localization signal" evidence="1">
    <location>
        <begin position="311"/>
        <end position="321"/>
    </location>
</feature>
<feature type="compositionally biased region" description="Basic residues" evidence="2">
    <location>
        <begin position="315"/>
        <end position="324"/>
    </location>
</feature>
<feature type="lipid moiety-binding region" description="N-myristoyl glycine; by host" evidence="1">
    <location>
        <position position="2"/>
    </location>
</feature>
<feature type="splice variant" id="VSP_018924" description="In isoform VP3." evidence="3">
    <location>
        <begin position="1"/>
        <end position="119"/>
    </location>
</feature>
<feature type="sequence conflict" description="In Ref. 1; AAA46554." evidence="3" ref="1">
    <original>A</original>
    <variation>R</variation>
    <location>
        <position position="58"/>
    </location>
</feature>
<feature type="sequence conflict" description="In Ref. 1; AAA46554/AAA46555." evidence="3" ref="1">
    <original>RY</original>
    <variation>SI</variation>
    <location>
        <begin position="247"/>
        <end position="248"/>
    </location>
</feature>
<keyword id="KW-0024">Alternative initiation</keyword>
<keyword id="KW-0025">Alternative splicing</keyword>
<keyword id="KW-0167">Capsid protein</keyword>
<keyword id="KW-0238">DNA-binding</keyword>
<keyword id="KW-1038">Host endoplasmic reticulum</keyword>
<keyword id="KW-1043">Host membrane</keyword>
<keyword id="KW-1048">Host nucleus</keyword>
<keyword id="KW-0426">Late protein</keyword>
<keyword id="KW-0449">Lipoprotein</keyword>
<keyword id="KW-0472">Membrane</keyword>
<keyword id="KW-0519">Myristate</keyword>
<keyword id="KW-1185">Reference proteome</keyword>
<keyword id="KW-1163">Viral penetration into host nucleus</keyword>
<keyword id="KW-0946">Virion</keyword>
<keyword id="KW-1160">Virus entry into host cell</keyword>
<accession>P24596</accession>
<accession>A2IBB4</accession>
<sequence>MGAFLAVLAEVFDLASITGLSVESILSGEALTTAELLQSHINNLVVYGGLTEAEALAAVEVTPQAFAALTSLFPNFPQALGALAATEFTATGALTVGAAVSAALYPYYWDYRTPVADLNMALQIWYPDLDILFPGALPFARFVNYIDPANWAADLYRAVGRYFWERVQAAGINFIEQQMETGRELAMRSVTSLSETLSQYFENARWAVSGLSTSLYHGLESYYSQLGLSPIQQRQLARNLGHPQPYRYDLYDAPQLKGQVSATYVTKVDPPGGANQRSAPDWMLPLLLGLYGDLTPSWKDTLEELEAEEDGSHSQKAKRRKTKA</sequence>
<proteinExistence type="inferred from homology"/>
<reference key="1">
    <citation type="journal article" date="1991" name="Virology">
        <title>Nucleotide sequence and genome organization of the murine polyomavirus, Kilham strain.</title>
        <authorList>
            <person name="Mayer M."/>
            <person name="Doerries K."/>
        </authorList>
    </citation>
    <scope>NUCLEOTIDE SEQUENCE [GENOMIC DNA]</scope>
</reference>
<reference key="2">
    <citation type="submission" date="2006-12" db="EMBL/GenBank/DDBJ databases">
        <title>Amino acid sequence homology between murine pneumotropic virus and human polyomaviruses.</title>
        <authorList>
            <person name="Libbey J.E."/>
            <person name="Kirkman N.J."/>
            <person name="Greenlee J.E."/>
            <person name="Fujinami R.S."/>
        </authorList>
    </citation>
    <scope>NUCLEOTIDE SEQUENCE [GENOMIC DNA]</scope>
</reference>
<reference key="3">
    <citation type="journal article" date="2009" name="Virology">
        <title>The Polyomaviridae: Contributions of virus structure to our understanding of virus receptors and infectious entry.</title>
        <authorList>
            <person name="Neu U."/>
            <person name="Stehle T."/>
            <person name="Atwood W.J."/>
        </authorList>
    </citation>
    <scope>REVIEW</scope>
</reference>
<evidence type="ECO:0000250" key="1"/>
<evidence type="ECO:0000256" key="2">
    <source>
        <dbReference type="SAM" id="MobiDB-lite"/>
    </source>
</evidence>
<evidence type="ECO:0000305" key="3"/>
<organism>
    <name type="scientific">Murine polyomavirus (strain Kilham)</name>
    <name type="common">MPyV</name>
    <name type="synonym">Murine pneumotropic virus</name>
    <dbReference type="NCBI Taxonomy" id="10638"/>
    <lineage>
        <taxon>Viruses</taxon>
        <taxon>Monodnaviria</taxon>
        <taxon>Shotokuvirae</taxon>
        <taxon>Cossaviricota</taxon>
        <taxon>Papovaviricetes</taxon>
        <taxon>Sepolyvirales</taxon>
        <taxon>Polyomaviridae</taxon>
        <taxon>Betapolyomavirus</taxon>
        <taxon>Betapolyomavirus secumuris</taxon>
    </lineage>
</organism>
<comment type="function">
    <molecule>Isoform VP2</molecule>
    <text evidence="1">Structural protein that resides within the core of the capsid surrounded by 72 VP1 pentamers. Participates in host cell receptor binding together with VP1. Following virus endocytosis and trafficking to the endoplasmic reticulum, VP2 and VP3 form oligomers and integrate into the endoplasmic reticulum membrane. Heterooligomer VP2-VP3 may create a viroporin for transporting the viral genome across the endoplasmic reticulum membrane to the cytoplasm. Nuclear entry of the viral DNA involves the selective exposure and importin recognition of VP2 or VP3 nuclear localization signal (shared C-terminus). Plays a role in virion assembly within the nucleus in particular through a DNA-binding domain located in the C-terminal region. A N-terminal myristoylation suggests a scaffold function for virion assembly (By similarity).</text>
</comment>
<comment type="function">
    <molecule>Isoform VP3</molecule>
    <text evidence="1">Structural protein that resides within the core of the capsid surrounded by 72 VP1 pentamers. Following virus endocytosis and trafficking to the endoplasmic reticulum, VP2 and VP3 form oligomers and integrate into the endoplasmic reticulum membrane. Heterooligomer VP2-VP3 may create a viroporin for transporting the viral genome across the endoplasmic reticulum membrane to the cytoplasm. Nuclear entry of the viral DNA involves the selective exposure and importin recognition of VP2 or VP3 nuclear localization signal (shared C-terminus). Plays a role in virion assembly within the nucleus (By similarity).</text>
</comment>
<comment type="subunit">
    <molecule>Isoform VP2</molecule>
    <text evidence="1">Forms homooligomers, and heterooligomers with VP3 in the endoplasmic reticulum membrane. Interacts (via D1 domain) with VP1.</text>
</comment>
<comment type="subunit">
    <molecule>Isoform VP3</molecule>
    <text>Interacts (via D1 domain) with VP1.</text>
</comment>
<comment type="subcellular location">
    <molecule>Isoform VP2</molecule>
    <subcellularLocation>
        <location>Virion</location>
    </subcellularLocation>
    <subcellularLocation>
        <location>Host nucleus</location>
    </subcellularLocation>
    <subcellularLocation>
        <location>Host endoplasmic reticulum</location>
    </subcellularLocation>
    <subcellularLocation>
        <location evidence="1">Host endoplasmic reticulum membrane</location>
    </subcellularLocation>
</comment>
<comment type="subcellular location">
    <molecule>Isoform VP3</molecule>
    <subcellularLocation>
        <location>Virion</location>
    </subcellularLocation>
    <subcellularLocation>
        <location>Host nucleus</location>
    </subcellularLocation>
    <subcellularLocation>
        <location>Host endoplasmic reticulum</location>
    </subcellularLocation>
    <subcellularLocation>
        <location evidence="1">Host endoplasmic reticulum membrane</location>
    </subcellularLocation>
</comment>
<comment type="alternative products">
    <event type="alternative splicing"/>
    <event type="alternative initiation"/>
    <isoform>
        <id>P24596-1</id>
        <name>VP2</name>
        <name>Minor capsid protein VP2</name>
        <sequence type="displayed"/>
    </isoform>
    <isoform>
        <id>P24596-2</id>
        <name>VP3</name>
        <name>Minor capsid protein VP3</name>
        <sequence type="described" ref="VSP_018924"/>
    </isoform>
    <isoform>
        <id>P24595-1</id>
        <name>VP1</name>
        <sequence type="external"/>
    </isoform>
</comment>
<comment type="miscellaneous">
    <molecule>Isoform VP2</molecule>
    <text>Produced by alternative splicing of the late mRNA.</text>
</comment>
<comment type="miscellaneous">
    <molecule>Isoform VP3</molecule>
    <text evidence="3">Produced by alternative initiation at Met-120 of isoform VP2.</text>
</comment>
<comment type="similarity">
    <text evidence="3">Belongs to the polyomaviruses capsid protein VP2 family.</text>
</comment>
<comment type="sequence caution" evidence="3">
    <conflict type="frameshift">
        <sequence resource="EMBL-CDS" id="AAA46554"/>
    </conflict>
</comment>
<comment type="sequence caution" evidence="3">
    <conflict type="frameshift">
        <sequence resource="EMBL-CDS" id="AAA46555"/>
    </conflict>
</comment>
<dbReference type="EMBL" id="M55904">
    <property type="protein sequence ID" value="AAA46554.2"/>
    <property type="status" value="ALT_FRAME"/>
    <property type="molecule type" value="Genomic_DNA"/>
</dbReference>
<dbReference type="EMBL" id="M55904">
    <property type="protein sequence ID" value="AAA46555.2"/>
    <property type="status" value="ALT_FRAME"/>
    <property type="molecule type" value="Genomic_DNA"/>
</dbReference>
<dbReference type="EMBL" id="EF186666">
    <property type="protein sequence ID" value="ABM67408.1"/>
    <property type="molecule type" value="Genomic_DNA"/>
</dbReference>
<dbReference type="PIR" id="D37945">
    <property type="entry name" value="VVVPK2"/>
</dbReference>
<dbReference type="RefSeq" id="NP_041235.2">
    <property type="nucleotide sequence ID" value="NC_001505.2"/>
</dbReference>
<dbReference type="RefSeq" id="NP_041236.2">
    <property type="nucleotide sequence ID" value="NC_001505.2"/>
</dbReference>
<dbReference type="GeneID" id="29031025"/>
<dbReference type="GeneID" id="29031026"/>
<dbReference type="KEGG" id="vg:29031025"/>
<dbReference type="KEGG" id="vg:29031026"/>
<dbReference type="Proteomes" id="UP000106006">
    <property type="component" value="Segment"/>
</dbReference>
<dbReference type="Proteomes" id="UP000158963">
    <property type="component" value="Genome"/>
</dbReference>
<dbReference type="GO" id="GO:0043657">
    <property type="term" value="C:host cell"/>
    <property type="evidence" value="ECO:0007669"/>
    <property type="project" value="GOC"/>
</dbReference>
<dbReference type="GO" id="GO:0044167">
    <property type="term" value="C:host cell endoplasmic reticulum membrane"/>
    <property type="evidence" value="ECO:0007669"/>
    <property type="project" value="UniProtKB-SubCell"/>
</dbReference>
<dbReference type="GO" id="GO:0042025">
    <property type="term" value="C:host cell nucleus"/>
    <property type="evidence" value="ECO:0007669"/>
    <property type="project" value="UniProtKB-SubCell"/>
</dbReference>
<dbReference type="GO" id="GO:0016020">
    <property type="term" value="C:membrane"/>
    <property type="evidence" value="ECO:0007669"/>
    <property type="project" value="UniProtKB-KW"/>
</dbReference>
<dbReference type="GO" id="GO:0019028">
    <property type="term" value="C:viral capsid"/>
    <property type="evidence" value="ECO:0007669"/>
    <property type="project" value="UniProtKB-KW"/>
</dbReference>
<dbReference type="GO" id="GO:0003677">
    <property type="term" value="F:DNA binding"/>
    <property type="evidence" value="ECO:0007669"/>
    <property type="project" value="UniProtKB-KW"/>
</dbReference>
<dbReference type="GO" id="GO:0005198">
    <property type="term" value="F:structural molecule activity"/>
    <property type="evidence" value="ECO:0007669"/>
    <property type="project" value="InterPro"/>
</dbReference>
<dbReference type="GO" id="GO:0046718">
    <property type="term" value="P:symbiont entry into host cell"/>
    <property type="evidence" value="ECO:0007669"/>
    <property type="project" value="UniProtKB-KW"/>
</dbReference>
<dbReference type="GO" id="GO:0075732">
    <property type="term" value="P:viral penetration into host nucleus"/>
    <property type="evidence" value="ECO:0007669"/>
    <property type="project" value="UniProtKB-KW"/>
</dbReference>
<dbReference type="InterPro" id="IPR001070">
    <property type="entry name" value="Polyoma_coat_VP2"/>
</dbReference>
<dbReference type="Pfam" id="PF00761">
    <property type="entry name" value="Polyoma_coat2"/>
    <property type="match status" value="1"/>
</dbReference>
<dbReference type="PIRSF" id="PIRSF003377">
    <property type="entry name" value="Polyoma_coat2"/>
    <property type="match status" value="1"/>
</dbReference>
<protein>
    <recommendedName>
        <fullName>Minor capsid protein VP2</fullName>
    </recommendedName>
    <alternativeName>
        <fullName>Minor structural protein VP2</fullName>
    </alternativeName>
</protein>